<evidence type="ECO:0000250" key="1"/>
<evidence type="ECO:0000250" key="2">
    <source>
        <dbReference type="UniProtKB" id="O96017"/>
    </source>
</evidence>
<evidence type="ECO:0000255" key="3">
    <source>
        <dbReference type="PROSITE-ProRule" id="PRU00086"/>
    </source>
</evidence>
<evidence type="ECO:0000255" key="4">
    <source>
        <dbReference type="PROSITE-ProRule" id="PRU00159"/>
    </source>
</evidence>
<evidence type="ECO:0000255" key="5">
    <source>
        <dbReference type="PROSITE-ProRule" id="PRU10027"/>
    </source>
</evidence>
<evidence type="ECO:0000256" key="6">
    <source>
        <dbReference type="SAM" id="MobiDB-lite"/>
    </source>
</evidence>
<evidence type="ECO:0000269" key="7">
    <source>
    </source>
</evidence>
<evidence type="ECO:0000269" key="8">
    <source>
    </source>
</evidence>
<evidence type="ECO:0000305" key="9"/>
<evidence type="ECO:0000312" key="10">
    <source>
        <dbReference type="MGI" id="MGI:1355321"/>
    </source>
</evidence>
<dbReference type="EC" id="2.7.11.1" evidence="2"/>
<dbReference type="EMBL" id="AF086905">
    <property type="protein sequence ID" value="AAC83694.1"/>
    <property type="molecule type" value="mRNA"/>
</dbReference>
<dbReference type="EMBL" id="BC056617">
    <property type="protein sequence ID" value="AAH56617.1"/>
    <property type="molecule type" value="mRNA"/>
</dbReference>
<dbReference type="CCDS" id="CCDS19533.1"/>
<dbReference type="RefSeq" id="NP_001412509.1">
    <property type="nucleotide sequence ID" value="NM_001425580.1"/>
</dbReference>
<dbReference type="RefSeq" id="NP_057890.1">
    <property type="nucleotide sequence ID" value="NM_016681.4"/>
</dbReference>
<dbReference type="RefSeq" id="XP_006535132.1">
    <property type="nucleotide sequence ID" value="XM_006535069.2"/>
</dbReference>
<dbReference type="RefSeq" id="XP_006535133.1">
    <property type="nucleotide sequence ID" value="XM_006535070.2"/>
</dbReference>
<dbReference type="SMR" id="Q9Z265"/>
<dbReference type="BioGRID" id="206143">
    <property type="interactions" value="5"/>
</dbReference>
<dbReference type="FunCoup" id="Q9Z265">
    <property type="interactions" value="2564"/>
</dbReference>
<dbReference type="IntAct" id="Q9Z265">
    <property type="interactions" value="4"/>
</dbReference>
<dbReference type="STRING" id="10090.ENSMUSP00000066679"/>
<dbReference type="GlyGen" id="Q9Z265">
    <property type="glycosylation" value="1 site"/>
</dbReference>
<dbReference type="iPTMnet" id="Q9Z265"/>
<dbReference type="PhosphoSitePlus" id="Q9Z265"/>
<dbReference type="PaxDb" id="10090-ENSMUSP00000066679"/>
<dbReference type="ProteomicsDB" id="281211"/>
<dbReference type="Pumba" id="Q9Z265"/>
<dbReference type="Antibodypedia" id="278">
    <property type="antibodies" value="2025 antibodies from 50 providers"/>
</dbReference>
<dbReference type="DNASU" id="50883"/>
<dbReference type="Ensembl" id="ENSMUST00000066160.3">
    <property type="protein sequence ID" value="ENSMUSP00000066679.2"/>
    <property type="gene ID" value="ENSMUSG00000029521.8"/>
</dbReference>
<dbReference type="GeneID" id="50883"/>
<dbReference type="KEGG" id="mmu:50883"/>
<dbReference type="UCSC" id="uc008yrw.1">
    <property type="organism name" value="mouse"/>
</dbReference>
<dbReference type="AGR" id="MGI:1355321"/>
<dbReference type="CTD" id="11200"/>
<dbReference type="MGI" id="MGI:1355321">
    <property type="gene designation" value="Chek2"/>
</dbReference>
<dbReference type="VEuPathDB" id="HostDB:ENSMUSG00000029521"/>
<dbReference type="eggNOG" id="KOG0615">
    <property type="taxonomic scope" value="Eukaryota"/>
</dbReference>
<dbReference type="GeneTree" id="ENSGT00800000124190"/>
<dbReference type="HOGENOM" id="CLU_000288_63_47_1"/>
<dbReference type="InParanoid" id="Q9Z265"/>
<dbReference type="OMA" id="MLCAVQY"/>
<dbReference type="OrthoDB" id="40902at2759"/>
<dbReference type="PhylomeDB" id="Q9Z265"/>
<dbReference type="TreeFam" id="TF101082"/>
<dbReference type="BRENDA" id="2.7.11.1">
    <property type="organism ID" value="3474"/>
</dbReference>
<dbReference type="Reactome" id="R-MMU-5693565">
    <property type="pathway name" value="Recruitment and ATM-mediated phosphorylation of repair and signaling proteins at DNA double strand breaks"/>
</dbReference>
<dbReference type="Reactome" id="R-MMU-6804756">
    <property type="pathway name" value="Regulation of TP53 Activity through Phosphorylation"/>
</dbReference>
<dbReference type="Reactome" id="R-MMU-6804757">
    <property type="pathway name" value="Regulation of TP53 Degradation"/>
</dbReference>
<dbReference type="Reactome" id="R-MMU-6804760">
    <property type="pathway name" value="Regulation of TP53 Activity through Methylation"/>
</dbReference>
<dbReference type="Reactome" id="R-MMU-69473">
    <property type="pathway name" value="G2/M DNA damage checkpoint"/>
</dbReference>
<dbReference type="Reactome" id="R-MMU-69541">
    <property type="pathway name" value="Stabilization of p53"/>
</dbReference>
<dbReference type="Reactome" id="R-MMU-69601">
    <property type="pathway name" value="Ubiquitin Mediated Degradation of Phosphorylated Cdc25A"/>
</dbReference>
<dbReference type="Reactome" id="R-MMU-75035">
    <property type="pathway name" value="Chk1/Chk2(Cds1) mediated inactivation of Cyclin B:Cdk1 complex"/>
</dbReference>
<dbReference type="BioGRID-ORCS" id="50883">
    <property type="hits" value="1 hit in 115 CRISPR screens"/>
</dbReference>
<dbReference type="CD-CODE" id="01CA17F3">
    <property type="entry name" value="Centrosome"/>
</dbReference>
<dbReference type="PRO" id="PR:Q9Z265"/>
<dbReference type="Proteomes" id="UP000000589">
    <property type="component" value="Chromosome 5"/>
</dbReference>
<dbReference type="RNAct" id="Q9Z265">
    <property type="molecule type" value="protein"/>
</dbReference>
<dbReference type="Bgee" id="ENSMUSG00000029521">
    <property type="expression patterns" value="Expressed in morula and 217 other cell types or tissues"/>
</dbReference>
<dbReference type="ExpressionAtlas" id="Q9Z265">
    <property type="expression patterns" value="baseline and differential"/>
</dbReference>
<dbReference type="GO" id="GO:0000781">
    <property type="term" value="C:chromosome, telomeric region"/>
    <property type="evidence" value="ECO:0007669"/>
    <property type="project" value="Ensembl"/>
</dbReference>
<dbReference type="GO" id="GO:0005794">
    <property type="term" value="C:Golgi apparatus"/>
    <property type="evidence" value="ECO:0007669"/>
    <property type="project" value="Ensembl"/>
</dbReference>
<dbReference type="GO" id="GO:0016605">
    <property type="term" value="C:PML body"/>
    <property type="evidence" value="ECO:0000250"/>
    <property type="project" value="UniProtKB"/>
</dbReference>
<dbReference type="GO" id="GO:0005524">
    <property type="term" value="F:ATP binding"/>
    <property type="evidence" value="ECO:0007669"/>
    <property type="project" value="UniProtKB-KW"/>
</dbReference>
<dbReference type="GO" id="GO:0046872">
    <property type="term" value="F:metal ion binding"/>
    <property type="evidence" value="ECO:0007669"/>
    <property type="project" value="UniProtKB-KW"/>
</dbReference>
<dbReference type="GO" id="GO:0042803">
    <property type="term" value="F:protein homodimerization activity"/>
    <property type="evidence" value="ECO:0000250"/>
    <property type="project" value="UniProtKB"/>
</dbReference>
<dbReference type="GO" id="GO:0004672">
    <property type="term" value="F:protein kinase activity"/>
    <property type="evidence" value="ECO:0000314"/>
    <property type="project" value="MGI"/>
</dbReference>
<dbReference type="GO" id="GO:0019901">
    <property type="term" value="F:protein kinase binding"/>
    <property type="evidence" value="ECO:0007669"/>
    <property type="project" value="Ensembl"/>
</dbReference>
<dbReference type="GO" id="GO:0106310">
    <property type="term" value="F:protein serine kinase activity"/>
    <property type="evidence" value="ECO:0007669"/>
    <property type="project" value="RHEA"/>
</dbReference>
<dbReference type="GO" id="GO:0004674">
    <property type="term" value="F:protein serine/threonine kinase activity"/>
    <property type="evidence" value="ECO:0000250"/>
    <property type="project" value="UniProtKB"/>
</dbReference>
<dbReference type="GO" id="GO:0031625">
    <property type="term" value="F:ubiquitin protein ligase binding"/>
    <property type="evidence" value="ECO:0007669"/>
    <property type="project" value="Ensembl"/>
</dbReference>
<dbReference type="GO" id="GO:0051301">
    <property type="term" value="P:cell division"/>
    <property type="evidence" value="ECO:0007669"/>
    <property type="project" value="UniProtKB-KW"/>
</dbReference>
<dbReference type="GO" id="GO:1903926">
    <property type="term" value="P:cellular response to bisphenol A"/>
    <property type="evidence" value="ECO:0007669"/>
    <property type="project" value="Ensembl"/>
</dbReference>
<dbReference type="GO" id="GO:0071480">
    <property type="term" value="P:cellular response to gamma radiation"/>
    <property type="evidence" value="ECO:0000315"/>
    <property type="project" value="MGI"/>
</dbReference>
<dbReference type="GO" id="GO:0071466">
    <property type="term" value="P:cellular response to xenobiotic stimulus"/>
    <property type="evidence" value="ECO:0007669"/>
    <property type="project" value="Ensembl"/>
</dbReference>
<dbReference type="GO" id="GO:0006974">
    <property type="term" value="P:DNA damage response"/>
    <property type="evidence" value="ECO:0000250"/>
    <property type="project" value="UniProtKB"/>
</dbReference>
<dbReference type="GO" id="GO:0030330">
    <property type="term" value="P:DNA damage response, signal transduction by p53 class mediator"/>
    <property type="evidence" value="ECO:0000315"/>
    <property type="project" value="MGI"/>
</dbReference>
<dbReference type="GO" id="GO:0006302">
    <property type="term" value="P:double-strand break repair"/>
    <property type="evidence" value="ECO:0000250"/>
    <property type="project" value="UniProtKB"/>
</dbReference>
<dbReference type="GO" id="GO:0000086">
    <property type="term" value="P:G2/M transition of mitotic cell cycle"/>
    <property type="evidence" value="ECO:0000250"/>
    <property type="project" value="UniProtKB"/>
</dbReference>
<dbReference type="GO" id="GO:0008630">
    <property type="term" value="P:intrinsic apoptotic signaling pathway in response to DNA damage"/>
    <property type="evidence" value="ECO:0000250"/>
    <property type="project" value="UniProtKB"/>
</dbReference>
<dbReference type="GO" id="GO:0042771">
    <property type="term" value="P:intrinsic apoptotic signaling pathway in response to DNA damage by p53 class mediator"/>
    <property type="evidence" value="ECO:0000315"/>
    <property type="project" value="MGI"/>
</dbReference>
<dbReference type="GO" id="GO:0031573">
    <property type="term" value="P:mitotic intra-S DNA damage checkpoint signaling"/>
    <property type="evidence" value="ECO:0000250"/>
    <property type="project" value="UniProtKB"/>
</dbReference>
<dbReference type="GO" id="GO:0090307">
    <property type="term" value="P:mitotic spindle assembly"/>
    <property type="evidence" value="ECO:0000250"/>
    <property type="project" value="UniProtKB"/>
</dbReference>
<dbReference type="GO" id="GO:2000002">
    <property type="term" value="P:negative regulation of DNA damage checkpoint"/>
    <property type="evidence" value="ECO:0007669"/>
    <property type="project" value="Ensembl"/>
</dbReference>
<dbReference type="GO" id="GO:2000210">
    <property type="term" value="P:positive regulation of anoikis"/>
    <property type="evidence" value="ECO:0007669"/>
    <property type="project" value="Ensembl"/>
</dbReference>
<dbReference type="GO" id="GO:0045893">
    <property type="term" value="P:positive regulation of DNA-templated transcription"/>
    <property type="evidence" value="ECO:0000250"/>
    <property type="project" value="UniProtKB"/>
</dbReference>
<dbReference type="GO" id="GO:0046777">
    <property type="term" value="P:protein autophosphorylation"/>
    <property type="evidence" value="ECO:0000250"/>
    <property type="project" value="UniProtKB"/>
</dbReference>
<dbReference type="GO" id="GO:0030163">
    <property type="term" value="P:protein catabolic process"/>
    <property type="evidence" value="ECO:0007669"/>
    <property type="project" value="Ensembl"/>
</dbReference>
<dbReference type="GO" id="GO:0050821">
    <property type="term" value="P:protein stabilization"/>
    <property type="evidence" value="ECO:0000250"/>
    <property type="project" value="UniProtKB"/>
</dbReference>
<dbReference type="GO" id="GO:2000785">
    <property type="term" value="P:regulation of autophagosome assembly"/>
    <property type="evidence" value="ECO:0007669"/>
    <property type="project" value="Ensembl"/>
</dbReference>
<dbReference type="GO" id="GO:0006355">
    <property type="term" value="P:regulation of DNA-templated transcription"/>
    <property type="evidence" value="ECO:0000250"/>
    <property type="project" value="UniProtKB"/>
</dbReference>
<dbReference type="GO" id="GO:0042176">
    <property type="term" value="P:regulation of protein catabolic process"/>
    <property type="evidence" value="ECO:0000250"/>
    <property type="project" value="UniProtKB"/>
</dbReference>
<dbReference type="GO" id="GO:0010332">
    <property type="term" value="P:response to gamma radiation"/>
    <property type="evidence" value="ECO:0000314"/>
    <property type="project" value="MGI"/>
</dbReference>
<dbReference type="GO" id="GO:1903416">
    <property type="term" value="P:response to glycoside"/>
    <property type="evidence" value="ECO:0007669"/>
    <property type="project" value="Ensembl"/>
</dbReference>
<dbReference type="GO" id="GO:0042770">
    <property type="term" value="P:signal transduction in response to DNA damage"/>
    <property type="evidence" value="ECO:0000314"/>
    <property type="project" value="MGI"/>
</dbReference>
<dbReference type="GO" id="GO:0070242">
    <property type="term" value="P:thymocyte apoptotic process"/>
    <property type="evidence" value="ECO:0000315"/>
    <property type="project" value="MGI"/>
</dbReference>
<dbReference type="CDD" id="cd22666">
    <property type="entry name" value="FHA_CHK2"/>
    <property type="match status" value="1"/>
</dbReference>
<dbReference type="CDD" id="cd14084">
    <property type="entry name" value="STKc_Chk2"/>
    <property type="match status" value="1"/>
</dbReference>
<dbReference type="FunFam" id="1.10.510.10:FF:000354">
    <property type="entry name" value="Serine/threonine-protein kinase Chk2"/>
    <property type="match status" value="1"/>
</dbReference>
<dbReference type="FunFam" id="2.60.200.20:FF:000011">
    <property type="entry name" value="Serine/threonine-protein kinase Chk2"/>
    <property type="match status" value="1"/>
</dbReference>
<dbReference type="FunFam" id="3.30.200.20:FF:000255">
    <property type="entry name" value="serine/threonine-protein kinase Chk2 isoform X1"/>
    <property type="match status" value="1"/>
</dbReference>
<dbReference type="Gene3D" id="2.60.200.20">
    <property type="match status" value="1"/>
</dbReference>
<dbReference type="Gene3D" id="3.30.200.20">
    <property type="entry name" value="Phosphorylase Kinase, domain 1"/>
    <property type="match status" value="1"/>
</dbReference>
<dbReference type="Gene3D" id="1.10.510.10">
    <property type="entry name" value="Transferase(Phosphotransferase) domain 1"/>
    <property type="match status" value="1"/>
</dbReference>
<dbReference type="InterPro" id="IPR000253">
    <property type="entry name" value="FHA_dom"/>
</dbReference>
<dbReference type="InterPro" id="IPR011009">
    <property type="entry name" value="Kinase-like_dom_sf"/>
</dbReference>
<dbReference type="InterPro" id="IPR000719">
    <property type="entry name" value="Prot_kinase_dom"/>
</dbReference>
<dbReference type="InterPro" id="IPR008271">
    <property type="entry name" value="Ser/Thr_kinase_AS"/>
</dbReference>
<dbReference type="InterPro" id="IPR008984">
    <property type="entry name" value="SMAD_FHA_dom_sf"/>
</dbReference>
<dbReference type="PANTHER" id="PTHR44167">
    <property type="entry name" value="OVARIAN-SPECIFIC SERINE/THREONINE-PROTEIN KINASE LOK-RELATED"/>
    <property type="match status" value="1"/>
</dbReference>
<dbReference type="PANTHER" id="PTHR44167:SF24">
    <property type="entry name" value="SERINE_THREONINE-PROTEIN KINASE CHK2"/>
    <property type="match status" value="1"/>
</dbReference>
<dbReference type="Pfam" id="PF00498">
    <property type="entry name" value="FHA"/>
    <property type="match status" value="1"/>
</dbReference>
<dbReference type="Pfam" id="PF00069">
    <property type="entry name" value="Pkinase"/>
    <property type="match status" value="1"/>
</dbReference>
<dbReference type="SMART" id="SM00240">
    <property type="entry name" value="FHA"/>
    <property type="match status" value="1"/>
</dbReference>
<dbReference type="SMART" id="SM00220">
    <property type="entry name" value="S_TKc"/>
    <property type="match status" value="1"/>
</dbReference>
<dbReference type="SUPFAM" id="SSF56112">
    <property type="entry name" value="Protein kinase-like (PK-like)"/>
    <property type="match status" value="1"/>
</dbReference>
<dbReference type="SUPFAM" id="SSF49879">
    <property type="entry name" value="SMAD/FHA domain"/>
    <property type="match status" value="1"/>
</dbReference>
<dbReference type="PROSITE" id="PS50006">
    <property type="entry name" value="FHA_DOMAIN"/>
    <property type="match status" value="1"/>
</dbReference>
<dbReference type="PROSITE" id="PS50011">
    <property type="entry name" value="PROTEIN_KINASE_DOM"/>
    <property type="match status" value="1"/>
</dbReference>
<dbReference type="PROSITE" id="PS00108">
    <property type="entry name" value="PROTEIN_KINASE_ST"/>
    <property type="match status" value="1"/>
</dbReference>
<organism>
    <name type="scientific">Mus musculus</name>
    <name type="common">Mouse</name>
    <dbReference type="NCBI Taxonomy" id="10090"/>
    <lineage>
        <taxon>Eukaryota</taxon>
        <taxon>Metazoa</taxon>
        <taxon>Chordata</taxon>
        <taxon>Craniata</taxon>
        <taxon>Vertebrata</taxon>
        <taxon>Euteleostomi</taxon>
        <taxon>Mammalia</taxon>
        <taxon>Eutheria</taxon>
        <taxon>Euarchontoglires</taxon>
        <taxon>Glires</taxon>
        <taxon>Rodentia</taxon>
        <taxon>Myomorpha</taxon>
        <taxon>Muroidea</taxon>
        <taxon>Muridae</taxon>
        <taxon>Murinae</taxon>
        <taxon>Mus</taxon>
        <taxon>Mus</taxon>
    </lineage>
</organism>
<keyword id="KW-0053">Apoptosis</keyword>
<keyword id="KW-0067">ATP-binding</keyword>
<keyword id="KW-0131">Cell cycle</keyword>
<keyword id="KW-0132">Cell division</keyword>
<keyword id="KW-0227">DNA damage</keyword>
<keyword id="KW-0234">DNA repair</keyword>
<keyword id="KW-0418">Kinase</keyword>
<keyword id="KW-0460">Magnesium</keyword>
<keyword id="KW-0479">Metal-binding</keyword>
<keyword id="KW-0498">Mitosis</keyword>
<keyword id="KW-0547">Nucleotide-binding</keyword>
<keyword id="KW-0539">Nucleus</keyword>
<keyword id="KW-0597">Phosphoprotein</keyword>
<keyword id="KW-1185">Reference proteome</keyword>
<keyword id="KW-0723">Serine/threonine-protein kinase</keyword>
<keyword id="KW-0804">Transcription</keyword>
<keyword id="KW-0805">Transcription regulation</keyword>
<keyword id="KW-0808">Transferase</keyword>
<keyword id="KW-0832">Ubl conjugation</keyword>
<reference key="1">
    <citation type="journal article" date="1998" name="Science">
        <title>Linkage of ATM to cell cycle regulation by the Chk2 protein kinase.</title>
        <authorList>
            <person name="Matsuoka S."/>
            <person name="Huang M."/>
            <person name="Elledge S.J."/>
        </authorList>
    </citation>
    <scope>NUCLEOTIDE SEQUENCE [MRNA]</scope>
</reference>
<reference key="2">
    <citation type="journal article" date="2004" name="Genome Res.">
        <title>The status, quality, and expansion of the NIH full-length cDNA project: the Mammalian Gene Collection (MGC).</title>
        <authorList>
            <consortium name="The MGC Project Team"/>
        </authorList>
    </citation>
    <scope>NUCLEOTIDE SEQUENCE [LARGE SCALE MRNA]</scope>
    <source>
        <strain>NMRI</strain>
        <tissue>Mammary gland</tissue>
    </source>
</reference>
<reference key="3">
    <citation type="journal article" date="2002" name="Mol. Cell. Biol.">
        <title>Chk2 is a tumor suppressor that regulates apoptosis in both an ataxia telangiectasia mutated (ATM)-dependent and an ATM-independent manner.</title>
        <authorList>
            <person name="Hirao A."/>
            <person name="Cheung A."/>
            <person name="Duncan G."/>
            <person name="Girard P.M."/>
            <person name="Elia A.J."/>
            <person name="Wakeham A."/>
            <person name="Okada H."/>
            <person name="Sarkissian T."/>
            <person name="Wong J.A."/>
            <person name="Sakai T."/>
            <person name="De Stanchina E."/>
            <person name="Bristow R.G."/>
            <person name="Suda T."/>
            <person name="Lowe S.W."/>
            <person name="Jeggo P.A."/>
            <person name="Elledge S.J."/>
            <person name="Mak T.W."/>
        </authorList>
    </citation>
    <scope>DISRUPTION PHENOTYPE</scope>
    <scope>FUNCTION IN APOPTOSIS</scope>
    <scope>TISSUE SPECIFICITY</scope>
</reference>
<reference key="4">
    <citation type="journal article" date="2015" name="Oncogene">
        <title>A novel recurrent CHEK2 Y390C mutation identified in high-risk Chinese breast cancer patients impairs its activity and is associated with increased breast cancer risk.</title>
        <authorList>
            <person name="Wang N."/>
            <person name="Ding H."/>
            <person name="Liu C."/>
            <person name="Li X."/>
            <person name="Wei L."/>
            <person name="Yu J."/>
            <person name="Liu M."/>
            <person name="Ying M."/>
            <person name="Gao W."/>
            <person name="Jiang H."/>
            <person name="Wang Y."/>
        </authorList>
    </citation>
    <scope>FUNCTION</scope>
    <scope>MUTAGENESIS OF TYR-394</scope>
</reference>
<proteinExistence type="evidence at protein level"/>
<sequence>MKSHHQSHSSTSSKAHDSASCSQSQGGFSQPQGTPSQLHELSQYQGSSSSSTGTVPSSSQSSHSSSGTLSSLETVSTQELCSIPEDQEPEEPGPAPWARLWALQDGFSNLDCVNDNYWFGRDKSCEYCFDGPLLRRTDKYRTYSKKHFRIFREMGPKNCYIVYIEDHSGNGTFVNTELIGKGKRCPLSNNSEIALSLCRNKVFVFFDLTVDDQSVYPKELRDEYIMSKTLGSGACGEVKMAFERKTCQKVAIKIISKRRFALGSSREADTAPSVETEIEILKKLNHPCIIKIKDVFDAEDYYIVLELMEGGELFDRVVGNKRLKEATCKLYFYQMLVAVQYLHENGIIHRDLKPENVLLSSQEEDCLIKITDFGQSKILGETSLMRTLCGTPTYLAPEVLVSNGTAGYSRAVDCWSLGVILFICLSGYPPFSEHKTQVSLKDQITSGKYNFIPEVWTDVSEEALDLVKKLLVVDPKARLTTEEALNHPWLQDEYMKKKFQDLLVQEKNSVTLPVAPAQTSSQKRPLELEVEGMPSTKRLSVCGAVL</sequence>
<protein>
    <recommendedName>
        <fullName evidence="9">Serine/threonine-protein kinase Chk2</fullName>
        <ecNumber evidence="2">2.7.11.1</ecNumber>
    </recommendedName>
    <alternativeName>
        <fullName>CHK2 checkpoint homolog</fullName>
    </alternativeName>
    <alternativeName>
        <fullName>Checkpoint kinase 2</fullName>
    </alternativeName>
</protein>
<feature type="chain" id="PRO_0000085859" description="Serine/threonine-protein kinase Chk2">
    <location>
        <begin position="1"/>
        <end position="546"/>
    </location>
</feature>
<feature type="domain" description="FHA" evidence="3">
    <location>
        <begin position="117"/>
        <end position="179"/>
    </location>
</feature>
<feature type="domain" description="Protein kinase" evidence="4">
    <location>
        <begin position="224"/>
        <end position="490"/>
    </location>
</feature>
<feature type="region of interest" description="Disordered" evidence="6">
    <location>
        <begin position="1"/>
        <end position="70"/>
    </location>
</feature>
<feature type="region of interest" description="T-loop/activation segment" evidence="1">
    <location>
        <begin position="372"/>
        <end position="398"/>
    </location>
</feature>
<feature type="compositionally biased region" description="Low complexity" evidence="6">
    <location>
        <begin position="8"/>
        <end position="70"/>
    </location>
</feature>
<feature type="active site" description="Proton acceptor" evidence="4 5">
    <location>
        <position position="351"/>
    </location>
</feature>
<feature type="binding site" evidence="4">
    <location>
        <begin position="231"/>
        <end position="238"/>
    </location>
    <ligand>
        <name>ATP</name>
        <dbReference type="ChEBI" id="CHEBI:30616"/>
    </ligand>
</feature>
<feature type="binding site" evidence="4">
    <location>
        <position position="253"/>
    </location>
    <ligand>
        <name>ATP</name>
        <dbReference type="ChEBI" id="CHEBI:30616"/>
    </ligand>
</feature>
<feature type="binding site" evidence="4">
    <location>
        <begin position="306"/>
        <end position="312"/>
    </location>
    <ligand>
        <name>ATP</name>
        <dbReference type="ChEBI" id="CHEBI:30616"/>
    </ligand>
</feature>
<feature type="binding site" evidence="4">
    <location>
        <begin position="355"/>
        <end position="356"/>
    </location>
    <ligand>
        <name>ATP</name>
        <dbReference type="ChEBI" id="CHEBI:30616"/>
    </ligand>
</feature>
<feature type="binding site" evidence="4">
    <location>
        <position position="372"/>
    </location>
    <ligand>
        <name>ATP</name>
        <dbReference type="ChEBI" id="CHEBI:30616"/>
    </ligand>
</feature>
<feature type="modified residue" description="Phosphothreonine; by MAP3K20" evidence="1">
    <location>
        <position position="68"/>
    </location>
</feature>
<feature type="modified residue" description="Phosphoserine; by PLK3" evidence="2">
    <location>
        <position position="71"/>
    </location>
</feature>
<feature type="modified residue" description="Phosphothreonine; by ATM and MAP3K20" evidence="2">
    <location>
        <position position="77"/>
    </location>
</feature>
<feature type="modified residue" description="Phosphoserine; by PLK3" evidence="2">
    <location>
        <position position="82"/>
    </location>
</feature>
<feature type="modified residue" description="Phosphoserine; by autocatalysis" evidence="2">
    <location>
        <position position="383"/>
    </location>
</feature>
<feature type="modified residue" description="Phosphothreonine; by autocatalysis" evidence="2">
    <location>
        <position position="387"/>
    </location>
</feature>
<feature type="modified residue" description="Phosphothreonine; by autocatalysis" evidence="2">
    <location>
        <position position="391"/>
    </location>
</feature>
<feature type="modified residue" description="Phosphoserine" evidence="2">
    <location>
        <position position="460"/>
    </location>
</feature>
<feature type="mutagenesis site" description="Does not inhibit cell survival upon DNA damage. Not phosphorylates p53/TP53." evidence="8">
    <original>Y</original>
    <variation>C</variation>
    <location>
        <position position="394"/>
    </location>
</feature>
<accession>Q9Z265</accession>
<name>CHK2_MOUSE</name>
<comment type="function">
    <text evidence="2 7 8">Serine/threonine-protein kinase which is required for checkpoint-mediated cell cycle arrest, activation of DNA repair and apoptosis in response to the presence of DNA double-strand breaks. May also negatively regulate cell cycle progression during unperturbed cell cycles. Following activation, phosphorylates numerous effectors preferentially at the consensus sequence [L-X-R-X-X-S/T]. Regulates cell cycle checkpoint arrest through phosphorylation of CDC25A, CDC25B and CDC25C, inhibiting their activity. Inhibition of CDC25 phosphatase activity leads to increased inhibitory tyrosine phosphorylation of CDK-cyclin complexes and blocks cell cycle progression. May also phosphorylate NEK6 which is involved in G2/M cell cycle arrest. Regulates DNA repair through phosphorylation of BRCA2, enhancing the association of RAD51 with chromatin which promotes DNA repair by homologous recombination. Also stimulates the transcription of genes involved in DNA repair (including BRCA2) through the phosphorylation and activation of the transcription factor FOXM1. Regulates apoptosis through the phosphorylation of p53/TP53, MDM4 and PML. Phosphorylation of p53/TP53 at 'Ser-20' by CHEK2 may alleviate inhibition by MDM2, leading to accumulation of active p53/TP53. Phosphorylation of MDM4 may also reduce degradation of p53/TP53. Also controls the transcription of pro-apoptotic genes through phosphorylation of the transcription factor E2F1. Tumor suppressor, it may also have a DNA damage-independent function in mitotic spindle assembly by phosphorylating BRCA1. Its absence may be a cause of the chromosomal instability observed in some cancer cells. Promotes the CCAR2-SIRT1 association and is required for CCAR2-mediated SIRT1 inhibition (By similarity). Under oxidative stress, promotes ATG7 ubiquitination by phosphorylating the E3 ubiquitin ligase TRIM32 at 'Ser-56' leading to positive regulation of the autophagosme assembly (By similarity).</text>
</comment>
<comment type="catalytic activity">
    <reaction evidence="2">
        <text>L-seryl-[protein] + ATP = O-phospho-L-seryl-[protein] + ADP + H(+)</text>
        <dbReference type="Rhea" id="RHEA:17989"/>
        <dbReference type="Rhea" id="RHEA-COMP:9863"/>
        <dbReference type="Rhea" id="RHEA-COMP:11604"/>
        <dbReference type="ChEBI" id="CHEBI:15378"/>
        <dbReference type="ChEBI" id="CHEBI:29999"/>
        <dbReference type="ChEBI" id="CHEBI:30616"/>
        <dbReference type="ChEBI" id="CHEBI:83421"/>
        <dbReference type="ChEBI" id="CHEBI:456216"/>
        <dbReference type="EC" id="2.7.11.1"/>
    </reaction>
</comment>
<comment type="catalytic activity">
    <reaction>
        <text>L-threonyl-[protein] + ATP = O-phospho-L-threonyl-[protein] + ADP + H(+)</text>
        <dbReference type="Rhea" id="RHEA:46608"/>
        <dbReference type="Rhea" id="RHEA-COMP:11060"/>
        <dbReference type="Rhea" id="RHEA-COMP:11605"/>
        <dbReference type="ChEBI" id="CHEBI:15378"/>
        <dbReference type="ChEBI" id="CHEBI:30013"/>
        <dbReference type="ChEBI" id="CHEBI:30616"/>
        <dbReference type="ChEBI" id="CHEBI:61977"/>
        <dbReference type="ChEBI" id="CHEBI:456216"/>
        <dbReference type="EC" id="2.7.11.1"/>
    </reaction>
</comment>
<comment type="cofactor">
    <cofactor>
        <name>Mg(2+)</name>
        <dbReference type="ChEBI" id="CHEBI:18420"/>
    </cofactor>
</comment>
<comment type="activity regulation">
    <text evidence="1">Activated through phosphorylation at Thr-68 by ATM in response to DNA double-strand breaks. Activation is modulated by several mediators including MDC1 and TP53BP1. Induces homodimerization with exchange of the T-loop/activation segment between protomers and transphosphorylation of the protomers. The autophosphorylated kinase dimer is fully active. Negatively regulated by PPM1D through dephosphorylation of Thr-68 (By similarity).</text>
</comment>
<comment type="subunit">
    <text evidence="2">Homodimer. Homodimerization is part of the activation process but the dimer may dissociate following activation. Interacts with PML. Interacts with TP53. Interacts with RB1; phosphorylates RB1. Interacts with BRCA1. Interacts (phosphorylated at Thr-68) with MDC1; requires ATM-mediated phosphorylation of CHEK2. Interacts with TP53BP1; modulates CHEK2 phosphorylation at Thr-68 in response to ionizing radiation. Interacts with CDC25A; phosphorylates CDC25A and mediates its degradation in response to ionizing radiation. Interacts with CUL1; mediates CHEK2 ubiquitination and regulation. Interacts with CDKN2AIP. Interacts (via protein kinase domain) with CCAR2 (via N-terminus). Interacts with SIRT1 (By similarity).</text>
</comment>
<comment type="subcellular location">
    <subcellularLocation>
        <location evidence="1">Nucleus</location>
        <location evidence="1">PML body</location>
    </subcellularLocation>
    <subcellularLocation>
        <location>Nucleus</location>
        <location>Nucleoplasm</location>
    </subcellularLocation>
    <text evidence="1">Recruited into PML bodies together with TP53.</text>
</comment>
<comment type="tissue specificity">
    <text evidence="7">Ubiquitously expressed with higher levels in the thymus, spleen and colon (at protein level).</text>
</comment>
<comment type="PTM">
    <text evidence="1">Phosphorylated. Phosphorylated at Ser-82 by PLK3 in response to DNA damage, promoting phosphorylation at Thr-77 by ATM and the G2/M transition checkpoint. Phosphorylation at Thr-77 induces homodimerization. Autophosphorylates at Thr-387 and Thr-391 in the T-loop/activation segment upon dimerization to become fully active. DNA damage-induced autophosphorylation at Ser-383 induces CUL1-mediated ubiquitination and regulates the pro-apoptotic function. Phosphorylation at Ser-460 also regulates ubiquitination. Phosphorylated by PLK4 (By similarity).</text>
</comment>
<comment type="PTM">
    <text evidence="1">Ubiquitinated. CUL1-mediated ubiquitination regulates the pro-apoptotic function. Ubiquitination may also regulate protein stability. Ubiquitinated by RNF8 via 'Lys-48'-linked ubiquitination (By similarity).</text>
</comment>
<comment type="disruption phenotype">
    <text evidence="7">No overt morphological phenotype but apoptosis and cell cycle arrest induced by ionizing radiation are abolished.</text>
</comment>
<comment type="similarity">
    <text evidence="9">Belongs to the protein kinase superfamily. CAMK Ser/Thr protein kinase family. CHK2 subfamily.</text>
</comment>
<gene>
    <name evidence="10" type="primary">Chek2</name>
    <name type="synonym">Chk2</name>
    <name type="synonym">Rad53</name>
</gene>